<reference key="1">
    <citation type="journal article" date="2001" name="Genome Res.">
        <title>The complete genome sequence of the lactic acid bacterium Lactococcus lactis ssp. lactis IL1403.</title>
        <authorList>
            <person name="Bolotin A."/>
            <person name="Wincker P."/>
            <person name="Mauger S."/>
            <person name="Jaillon O."/>
            <person name="Malarme K."/>
            <person name="Weissenbach J."/>
            <person name="Ehrlich S.D."/>
            <person name="Sorokin A."/>
        </authorList>
    </citation>
    <scope>NUCLEOTIDE SEQUENCE [LARGE SCALE GENOMIC DNA]</scope>
    <source>
        <strain>IL1403</strain>
    </source>
</reference>
<feature type="chain" id="PRO_0000151158" description="Undecaprenyl-diphosphatase">
    <location>
        <begin position="1"/>
        <end position="284"/>
    </location>
</feature>
<feature type="transmembrane region" description="Helical" evidence="1">
    <location>
        <begin position="7"/>
        <end position="27"/>
    </location>
</feature>
<feature type="transmembrane region" description="Helical" evidence="1">
    <location>
        <begin position="44"/>
        <end position="64"/>
    </location>
</feature>
<feature type="transmembrane region" description="Helical" evidence="1">
    <location>
        <begin position="90"/>
        <end position="110"/>
    </location>
</feature>
<feature type="transmembrane region" description="Helical" evidence="1">
    <location>
        <begin position="116"/>
        <end position="136"/>
    </location>
</feature>
<feature type="transmembrane region" description="Helical" evidence="1">
    <location>
        <begin position="167"/>
        <end position="187"/>
    </location>
</feature>
<feature type="transmembrane region" description="Helical" evidence="1">
    <location>
        <begin position="197"/>
        <end position="217"/>
    </location>
</feature>
<feature type="transmembrane region" description="Helical" evidence="1">
    <location>
        <begin position="229"/>
        <end position="249"/>
    </location>
</feature>
<feature type="transmembrane region" description="Helical" evidence="1">
    <location>
        <begin position="259"/>
        <end position="279"/>
    </location>
</feature>
<proteinExistence type="inferred from homology"/>
<comment type="function">
    <text evidence="1">Catalyzes the dephosphorylation of undecaprenyl diphosphate (UPP). Confers resistance to bacitracin.</text>
</comment>
<comment type="catalytic activity">
    <reaction evidence="1">
        <text>di-trans,octa-cis-undecaprenyl diphosphate + H2O = di-trans,octa-cis-undecaprenyl phosphate + phosphate + H(+)</text>
        <dbReference type="Rhea" id="RHEA:28094"/>
        <dbReference type="ChEBI" id="CHEBI:15377"/>
        <dbReference type="ChEBI" id="CHEBI:15378"/>
        <dbReference type="ChEBI" id="CHEBI:43474"/>
        <dbReference type="ChEBI" id="CHEBI:58405"/>
        <dbReference type="ChEBI" id="CHEBI:60392"/>
        <dbReference type="EC" id="3.6.1.27"/>
    </reaction>
</comment>
<comment type="subcellular location">
    <subcellularLocation>
        <location evidence="1">Cell membrane</location>
        <topology evidence="1">Multi-pass membrane protein</topology>
    </subcellularLocation>
</comment>
<comment type="miscellaneous">
    <text>Bacitracin is thought to be involved in the inhibition of peptidoglycan synthesis by sequestering undecaprenyl diphosphate, thereby reducing the pool of lipid carrier available.</text>
</comment>
<comment type="similarity">
    <text evidence="1">Belongs to the UppP family.</text>
</comment>
<name>UPPP_LACLA</name>
<evidence type="ECO:0000255" key="1">
    <source>
        <dbReference type="HAMAP-Rule" id="MF_01006"/>
    </source>
</evidence>
<organism>
    <name type="scientific">Lactococcus lactis subsp. lactis (strain IL1403)</name>
    <name type="common">Streptococcus lactis</name>
    <dbReference type="NCBI Taxonomy" id="272623"/>
    <lineage>
        <taxon>Bacteria</taxon>
        <taxon>Bacillati</taxon>
        <taxon>Bacillota</taxon>
        <taxon>Bacilli</taxon>
        <taxon>Lactobacillales</taxon>
        <taxon>Streptococcaceae</taxon>
        <taxon>Lactococcus</taxon>
    </lineage>
</organism>
<gene>
    <name evidence="1" type="primary">uppP</name>
    <name type="synonym">bacA</name>
    <name type="synonym">upk</name>
    <name type="ordered locus">LL2192</name>
    <name type="ORF">L58643</name>
</gene>
<sequence length="284" mass="32079">MDFIRAIILGVIEGITEWLPISSTGHLIIADEFIRLNQSAAFKEMFDVVIQLGAILSVVVLYFHKLNPFNKLNPADKQKTPREIQLTWRLWLKVLIAALPAAIIGLPLNDWLDKHFYHFVPVAFMLIIYGVAFIVIERRWVPNHEFSVMNIDRLPYRAALYIGLFQVLSLLPGTSRSGATIVGALLVGVSREVAAEFTFFLGIPVMFGASFIKILHFFKNGNSLSFEQFGVLLVACIVAFGVSMVAIKFLTDYVKKHDFTFFGKYRIVLGIILLIYAMFRAFLG</sequence>
<dbReference type="EC" id="3.6.1.27" evidence="1"/>
<dbReference type="EMBL" id="AE005176">
    <property type="protein sequence ID" value="AAK06290.1"/>
    <property type="molecule type" value="Genomic_DNA"/>
</dbReference>
<dbReference type="PIR" id="H86898">
    <property type="entry name" value="H86898"/>
</dbReference>
<dbReference type="RefSeq" id="NP_268349.1">
    <property type="nucleotide sequence ID" value="NC_002662.1"/>
</dbReference>
<dbReference type="RefSeq" id="WP_010906372.1">
    <property type="nucleotide sequence ID" value="NC_002662.1"/>
</dbReference>
<dbReference type="SMR" id="Q9CDM7"/>
<dbReference type="PaxDb" id="272623-L58643"/>
<dbReference type="EnsemblBacteria" id="AAK06290">
    <property type="protein sequence ID" value="AAK06290"/>
    <property type="gene ID" value="L58643"/>
</dbReference>
<dbReference type="KEGG" id="lla:L58643"/>
<dbReference type="PATRIC" id="fig|272623.7.peg.2354"/>
<dbReference type="eggNOG" id="COG1968">
    <property type="taxonomic scope" value="Bacteria"/>
</dbReference>
<dbReference type="HOGENOM" id="CLU_060296_2_0_9"/>
<dbReference type="OrthoDB" id="9808289at2"/>
<dbReference type="Proteomes" id="UP000002196">
    <property type="component" value="Chromosome"/>
</dbReference>
<dbReference type="GO" id="GO:0005886">
    <property type="term" value="C:plasma membrane"/>
    <property type="evidence" value="ECO:0007669"/>
    <property type="project" value="UniProtKB-SubCell"/>
</dbReference>
<dbReference type="GO" id="GO:0050380">
    <property type="term" value="F:undecaprenyl-diphosphatase activity"/>
    <property type="evidence" value="ECO:0007669"/>
    <property type="project" value="UniProtKB-UniRule"/>
</dbReference>
<dbReference type="GO" id="GO:0071555">
    <property type="term" value="P:cell wall organization"/>
    <property type="evidence" value="ECO:0007669"/>
    <property type="project" value="UniProtKB-KW"/>
</dbReference>
<dbReference type="GO" id="GO:0009252">
    <property type="term" value="P:peptidoglycan biosynthetic process"/>
    <property type="evidence" value="ECO:0007669"/>
    <property type="project" value="UniProtKB-KW"/>
</dbReference>
<dbReference type="GO" id="GO:0008360">
    <property type="term" value="P:regulation of cell shape"/>
    <property type="evidence" value="ECO:0007669"/>
    <property type="project" value="UniProtKB-KW"/>
</dbReference>
<dbReference type="GO" id="GO:0046677">
    <property type="term" value="P:response to antibiotic"/>
    <property type="evidence" value="ECO:0007669"/>
    <property type="project" value="UniProtKB-UniRule"/>
</dbReference>
<dbReference type="HAMAP" id="MF_01006">
    <property type="entry name" value="Undec_diphosphatase"/>
    <property type="match status" value="1"/>
</dbReference>
<dbReference type="InterPro" id="IPR003824">
    <property type="entry name" value="UppP"/>
</dbReference>
<dbReference type="NCBIfam" id="NF001389">
    <property type="entry name" value="PRK00281.1-2"/>
    <property type="match status" value="1"/>
</dbReference>
<dbReference type="NCBIfam" id="NF001390">
    <property type="entry name" value="PRK00281.1-4"/>
    <property type="match status" value="1"/>
</dbReference>
<dbReference type="NCBIfam" id="NF001391">
    <property type="entry name" value="PRK00281.1-5"/>
    <property type="match status" value="1"/>
</dbReference>
<dbReference type="NCBIfam" id="TIGR00753">
    <property type="entry name" value="undec_PP_bacA"/>
    <property type="match status" value="1"/>
</dbReference>
<dbReference type="PANTHER" id="PTHR30622">
    <property type="entry name" value="UNDECAPRENYL-DIPHOSPHATASE"/>
    <property type="match status" value="1"/>
</dbReference>
<dbReference type="PANTHER" id="PTHR30622:SF3">
    <property type="entry name" value="UNDECAPRENYL-DIPHOSPHATASE"/>
    <property type="match status" value="1"/>
</dbReference>
<dbReference type="Pfam" id="PF02673">
    <property type="entry name" value="BacA"/>
    <property type="match status" value="1"/>
</dbReference>
<keyword id="KW-0046">Antibiotic resistance</keyword>
<keyword id="KW-1003">Cell membrane</keyword>
<keyword id="KW-0133">Cell shape</keyword>
<keyword id="KW-0961">Cell wall biogenesis/degradation</keyword>
<keyword id="KW-0378">Hydrolase</keyword>
<keyword id="KW-0472">Membrane</keyword>
<keyword id="KW-0573">Peptidoglycan synthesis</keyword>
<keyword id="KW-1185">Reference proteome</keyword>
<keyword id="KW-0812">Transmembrane</keyword>
<keyword id="KW-1133">Transmembrane helix</keyword>
<accession>Q9CDM7</accession>
<protein>
    <recommendedName>
        <fullName evidence="1">Undecaprenyl-diphosphatase</fullName>
        <ecNumber evidence="1">3.6.1.27</ecNumber>
    </recommendedName>
    <alternativeName>
        <fullName evidence="1">Bacitracin resistance protein</fullName>
    </alternativeName>
    <alternativeName>
        <fullName evidence="1">Undecaprenyl pyrophosphate phosphatase</fullName>
    </alternativeName>
</protein>